<dbReference type="EMBL" id="AK004792">
    <property type="protein sequence ID" value="BAB23568.2"/>
    <property type="molecule type" value="mRNA"/>
</dbReference>
<dbReference type="EMBL" id="BC076587">
    <property type="protein sequence ID" value="AAH76587.1"/>
    <property type="molecule type" value="mRNA"/>
</dbReference>
<dbReference type="CCDS" id="CCDS51510.1">
    <molecule id="Q9DBR4-1"/>
</dbReference>
<dbReference type="CCDS" id="CCDS57344.1">
    <molecule id="Q9DBR4-3"/>
</dbReference>
<dbReference type="RefSeq" id="NP_001188343.1">
    <property type="nucleotide sequence ID" value="NM_001201414.1"/>
</dbReference>
<dbReference type="RefSeq" id="NP_001188344.1">
    <molecule id="Q9DBR4-3"/>
    <property type="nucleotide sequence ID" value="NM_001201415.2"/>
</dbReference>
<dbReference type="RefSeq" id="NP_033816.1">
    <molecule id="Q9DBR4-1"/>
    <property type="nucleotide sequence ID" value="NM_009686.3"/>
</dbReference>
<dbReference type="RefSeq" id="XP_030109938.1">
    <molecule id="Q9DBR4-1"/>
    <property type="nucleotide sequence ID" value="XM_030254078.2"/>
</dbReference>
<dbReference type="RefSeq" id="XP_030109939.1">
    <molecule id="Q9DBR4-1"/>
    <property type="nucleotide sequence ID" value="XM_030254079.2"/>
</dbReference>
<dbReference type="RefSeq" id="XP_030109940.1">
    <molecule id="Q9DBR4-2"/>
    <property type="nucleotide sequence ID" value="XM_030254080.2"/>
</dbReference>
<dbReference type="RefSeq" id="XP_030109941.1">
    <molecule id="Q9DBR4-2"/>
    <property type="nucleotide sequence ID" value="XM_030254081.2"/>
</dbReference>
<dbReference type="RefSeq" id="XP_036020640.1">
    <molecule id="Q9DBR4-2"/>
    <property type="nucleotide sequence ID" value="XM_036164747.1"/>
</dbReference>
<dbReference type="RefSeq" id="XP_036020641.1">
    <molecule id="Q9DBR4-3"/>
    <property type="nucleotide sequence ID" value="XM_036164748.1"/>
</dbReference>
<dbReference type="PDB" id="1WGU">
    <property type="method" value="NMR"/>
    <property type="chains" value="A=582-704"/>
</dbReference>
<dbReference type="PDB" id="2ROZ">
    <property type="method" value="NMR"/>
    <property type="chains" value="B=582-704"/>
</dbReference>
<dbReference type="PDB" id="2YSZ">
    <property type="method" value="NMR"/>
    <property type="chains" value="A=582-704"/>
</dbReference>
<dbReference type="PDB" id="2YT0">
    <property type="method" value="NMR"/>
    <property type="chains" value="A=564-567, A=582-704"/>
</dbReference>
<dbReference type="PDB" id="2YT1">
    <property type="method" value="NMR"/>
    <property type="chains" value="A=582-704"/>
</dbReference>
<dbReference type="PDBsum" id="1WGU"/>
<dbReference type="PDBsum" id="2ROZ"/>
<dbReference type="PDBsum" id="2YSZ"/>
<dbReference type="PDBsum" id="2YT0"/>
<dbReference type="PDBsum" id="2YT1"/>
<dbReference type="BMRB" id="Q9DBR4"/>
<dbReference type="SMR" id="Q9DBR4"/>
<dbReference type="BioGRID" id="198142">
    <property type="interactions" value="8"/>
</dbReference>
<dbReference type="ELM" id="Q9DBR4"/>
<dbReference type="FunCoup" id="Q9DBR4">
    <property type="interactions" value="2522"/>
</dbReference>
<dbReference type="IntAct" id="Q9DBR4">
    <property type="interactions" value="1"/>
</dbReference>
<dbReference type="MINT" id="Q9DBR4"/>
<dbReference type="STRING" id="10090.ENSMUSP00000123752"/>
<dbReference type="GlyGen" id="Q9DBR4">
    <property type="glycosylation" value="2 sites"/>
</dbReference>
<dbReference type="iPTMnet" id="Q9DBR4"/>
<dbReference type="PhosphoSitePlus" id="Q9DBR4"/>
<dbReference type="SwissPalm" id="Q9DBR4"/>
<dbReference type="jPOST" id="Q9DBR4"/>
<dbReference type="PaxDb" id="10090-ENSMUSP00000125211"/>
<dbReference type="ProteomicsDB" id="296363">
    <molecule id="Q9DBR4-1"/>
</dbReference>
<dbReference type="ProteomicsDB" id="296364">
    <molecule id="Q9DBR4-2"/>
</dbReference>
<dbReference type="ProteomicsDB" id="296365">
    <molecule id="Q9DBR4-3"/>
</dbReference>
<dbReference type="Pumba" id="Q9DBR4"/>
<dbReference type="Antibodypedia" id="5811">
    <property type="antibodies" value="172 antibodies from 30 providers"/>
</dbReference>
<dbReference type="DNASU" id="11787"/>
<dbReference type="Ensembl" id="ENSMUST00000159786.8">
    <molecule id="Q9DBR4-3"/>
    <property type="protein sequence ID" value="ENSMUSP00000125211.3"/>
    <property type="gene ID" value="ENSMUSG00000029207.18"/>
</dbReference>
<dbReference type="Ensembl" id="ENSMUST00000162349.8">
    <molecule id="Q9DBR4-1"/>
    <property type="protein sequence ID" value="ENSMUSP00000123752.3"/>
    <property type="gene ID" value="ENSMUSG00000029207.18"/>
</dbReference>
<dbReference type="GeneID" id="11787"/>
<dbReference type="KEGG" id="mmu:11787"/>
<dbReference type="UCSC" id="uc008xpb.2">
    <molecule id="Q9DBR4-3"/>
    <property type="organism name" value="mouse"/>
</dbReference>
<dbReference type="UCSC" id="uc033ijy.1">
    <molecule id="Q9DBR4-1"/>
    <property type="organism name" value="mouse"/>
</dbReference>
<dbReference type="AGR" id="MGI:108405"/>
<dbReference type="CTD" id="323"/>
<dbReference type="MGI" id="MGI:108405">
    <property type="gene designation" value="Apbb2"/>
</dbReference>
<dbReference type="VEuPathDB" id="HostDB:ENSMUSG00000029207"/>
<dbReference type="eggNOG" id="ENOG502QT08">
    <property type="taxonomic scope" value="Eukaryota"/>
</dbReference>
<dbReference type="GeneTree" id="ENSGT00390000000002"/>
<dbReference type="InParanoid" id="Q9DBR4"/>
<dbReference type="OMA" id="NVPHADD"/>
<dbReference type="OrthoDB" id="5969782at2759"/>
<dbReference type="PhylomeDB" id="Q9DBR4"/>
<dbReference type="TreeFam" id="TF314331"/>
<dbReference type="BioGRID-ORCS" id="11787">
    <property type="hits" value="5 hits in 76 CRISPR screens"/>
</dbReference>
<dbReference type="ChiTaRS" id="Apbb2">
    <property type="organism name" value="mouse"/>
</dbReference>
<dbReference type="EvolutionaryTrace" id="Q9DBR4"/>
<dbReference type="PRO" id="PR:Q9DBR4"/>
<dbReference type="Proteomes" id="UP000000589">
    <property type="component" value="Chromosome 5"/>
</dbReference>
<dbReference type="RNAct" id="Q9DBR4">
    <property type="molecule type" value="protein"/>
</dbReference>
<dbReference type="Bgee" id="ENSMUSG00000029207">
    <property type="expression patterns" value="Expressed in undifferentiated genital tubercle and 264 other cell types or tissues"/>
</dbReference>
<dbReference type="ExpressionAtlas" id="Q9DBR4">
    <property type="expression patterns" value="baseline and differential"/>
</dbReference>
<dbReference type="GO" id="GO:0005737">
    <property type="term" value="C:cytoplasm"/>
    <property type="evidence" value="ECO:0000314"/>
    <property type="project" value="MGI"/>
</dbReference>
<dbReference type="GO" id="GO:0005769">
    <property type="term" value="C:early endosome"/>
    <property type="evidence" value="ECO:0000250"/>
    <property type="project" value="UniProtKB"/>
</dbReference>
<dbReference type="GO" id="GO:0005783">
    <property type="term" value="C:endoplasmic reticulum"/>
    <property type="evidence" value="ECO:0000250"/>
    <property type="project" value="UniProtKB"/>
</dbReference>
<dbReference type="GO" id="GO:0005794">
    <property type="term" value="C:Golgi apparatus"/>
    <property type="evidence" value="ECO:0000250"/>
    <property type="project" value="UniProtKB"/>
</dbReference>
<dbReference type="GO" id="GO:0005634">
    <property type="term" value="C:nucleus"/>
    <property type="evidence" value="ECO:0007669"/>
    <property type="project" value="Ensembl"/>
</dbReference>
<dbReference type="GO" id="GO:0001540">
    <property type="term" value="F:amyloid-beta binding"/>
    <property type="evidence" value="ECO:0007669"/>
    <property type="project" value="InterPro"/>
</dbReference>
<dbReference type="GO" id="GO:0007411">
    <property type="term" value="P:axon guidance"/>
    <property type="evidence" value="ECO:0000316"/>
    <property type="project" value="MGI"/>
</dbReference>
<dbReference type="GO" id="GO:0030198">
    <property type="term" value="P:extracellular matrix organization"/>
    <property type="evidence" value="ECO:0000316"/>
    <property type="project" value="MGI"/>
</dbReference>
<dbReference type="GO" id="GO:0036438">
    <property type="term" value="P:maintenance of lens transparency"/>
    <property type="evidence" value="ECO:0000315"/>
    <property type="project" value="UniProtKB"/>
</dbReference>
<dbReference type="GO" id="GO:0043066">
    <property type="term" value="P:negative regulation of apoptotic process"/>
    <property type="evidence" value="ECO:0000316"/>
    <property type="project" value="MGI"/>
</dbReference>
<dbReference type="GO" id="GO:1901988">
    <property type="term" value="P:negative regulation of cell cycle phase transition"/>
    <property type="evidence" value="ECO:0007669"/>
    <property type="project" value="Ensembl"/>
</dbReference>
<dbReference type="GO" id="GO:0000122">
    <property type="term" value="P:negative regulation of transcription by RNA polymerase II"/>
    <property type="evidence" value="ECO:0007669"/>
    <property type="project" value="Ensembl"/>
</dbReference>
<dbReference type="GO" id="GO:0001764">
    <property type="term" value="P:neuron migration"/>
    <property type="evidence" value="ECO:0000316"/>
    <property type="project" value="MGI"/>
</dbReference>
<dbReference type="GO" id="GO:0043065">
    <property type="term" value="P:positive regulation of apoptotic process"/>
    <property type="evidence" value="ECO:0000314"/>
    <property type="project" value="MGI"/>
</dbReference>
<dbReference type="GO" id="GO:0045944">
    <property type="term" value="P:positive regulation of transcription by RNA polymerase II"/>
    <property type="evidence" value="ECO:0000250"/>
    <property type="project" value="UniProtKB"/>
</dbReference>
<dbReference type="GO" id="GO:0050821">
    <property type="term" value="P:protein stabilization"/>
    <property type="evidence" value="ECO:0000303"/>
    <property type="project" value="UniProtKB"/>
</dbReference>
<dbReference type="GO" id="GO:0006939">
    <property type="term" value="P:smooth muscle contraction"/>
    <property type="evidence" value="ECO:0000315"/>
    <property type="project" value="UniProtKB"/>
</dbReference>
<dbReference type="CDD" id="cd01272">
    <property type="entry name" value="PTB1_Fe65"/>
    <property type="match status" value="1"/>
</dbReference>
<dbReference type="CDD" id="cd01271">
    <property type="entry name" value="PTB2_Fe65"/>
    <property type="match status" value="1"/>
</dbReference>
<dbReference type="CDD" id="cd00201">
    <property type="entry name" value="WW"/>
    <property type="match status" value="1"/>
</dbReference>
<dbReference type="FunFam" id="2.30.29.30:FF:000019">
    <property type="entry name" value="Amyloid beta (A4) precursor protein-binding, family B, member 1 (Fe65)"/>
    <property type="match status" value="1"/>
</dbReference>
<dbReference type="FunFam" id="2.20.70.10:FF:000003">
    <property type="entry name" value="amyloid beta A4 precursor protein-binding family B member 2"/>
    <property type="match status" value="1"/>
</dbReference>
<dbReference type="FunFam" id="2.30.29.30:FF:000034">
    <property type="entry name" value="amyloid beta A4 precursor protein-binding family B member 2"/>
    <property type="match status" value="1"/>
</dbReference>
<dbReference type="Gene3D" id="2.20.70.10">
    <property type="match status" value="1"/>
</dbReference>
<dbReference type="Gene3D" id="2.30.29.30">
    <property type="entry name" value="Pleckstrin-homology domain (PH domain)/Phosphotyrosine-binding domain (PTB)"/>
    <property type="match status" value="2"/>
</dbReference>
<dbReference type="InterPro" id="IPR039576">
    <property type="entry name" value="APBB1/2/3"/>
</dbReference>
<dbReference type="InterPro" id="IPR011993">
    <property type="entry name" value="PH-like_dom_sf"/>
</dbReference>
<dbReference type="InterPro" id="IPR006020">
    <property type="entry name" value="PTB/PI_dom"/>
</dbReference>
<dbReference type="InterPro" id="IPR001202">
    <property type="entry name" value="WW_dom"/>
</dbReference>
<dbReference type="InterPro" id="IPR036020">
    <property type="entry name" value="WW_dom_sf"/>
</dbReference>
<dbReference type="PANTHER" id="PTHR14058">
    <property type="entry name" value="AMYLOID BETA A4 PRECURSOR PROTEIN-BINDING FAMILY B"/>
    <property type="match status" value="1"/>
</dbReference>
<dbReference type="PANTHER" id="PTHR14058:SF11">
    <property type="entry name" value="AMYLOID BETA PRECURSOR PROTEIN BINDING FAMILY B MEMBER 2"/>
    <property type="match status" value="1"/>
</dbReference>
<dbReference type="Pfam" id="PF00640">
    <property type="entry name" value="PID"/>
    <property type="match status" value="2"/>
</dbReference>
<dbReference type="Pfam" id="PF00397">
    <property type="entry name" value="WW"/>
    <property type="match status" value="1"/>
</dbReference>
<dbReference type="SMART" id="SM00462">
    <property type="entry name" value="PTB"/>
    <property type="match status" value="2"/>
</dbReference>
<dbReference type="SMART" id="SM00456">
    <property type="entry name" value="WW"/>
    <property type="match status" value="1"/>
</dbReference>
<dbReference type="SUPFAM" id="SSF50729">
    <property type="entry name" value="PH domain-like"/>
    <property type="match status" value="2"/>
</dbReference>
<dbReference type="SUPFAM" id="SSF51045">
    <property type="entry name" value="WW domain"/>
    <property type="match status" value="1"/>
</dbReference>
<dbReference type="PROSITE" id="PS01179">
    <property type="entry name" value="PID"/>
    <property type="match status" value="2"/>
</dbReference>
<dbReference type="PROSITE" id="PS01159">
    <property type="entry name" value="WW_DOMAIN_1"/>
    <property type="match status" value="1"/>
</dbReference>
<dbReference type="PROSITE" id="PS50020">
    <property type="entry name" value="WW_DOMAIN_2"/>
    <property type="match status" value="1"/>
</dbReference>
<evidence type="ECO:0000250" key="1">
    <source>
        <dbReference type="UniProtKB" id="Q92870"/>
    </source>
</evidence>
<evidence type="ECO:0000255" key="2">
    <source>
        <dbReference type="PROSITE-ProRule" id="PRU00148"/>
    </source>
</evidence>
<evidence type="ECO:0000255" key="3">
    <source>
        <dbReference type="PROSITE-ProRule" id="PRU00224"/>
    </source>
</evidence>
<evidence type="ECO:0000256" key="4">
    <source>
        <dbReference type="SAM" id="MobiDB-lite"/>
    </source>
</evidence>
<evidence type="ECO:0000269" key="5">
    <source>
    </source>
</evidence>
<evidence type="ECO:0000269" key="6">
    <source>
    </source>
</evidence>
<evidence type="ECO:0000269" key="7">
    <source>
    </source>
</evidence>
<evidence type="ECO:0000303" key="8">
    <source>
    </source>
</evidence>
<evidence type="ECO:0000303" key="9">
    <source>
    </source>
</evidence>
<evidence type="ECO:0000312" key="10">
    <source>
        <dbReference type="MGI" id="MGI:108405"/>
    </source>
</evidence>
<evidence type="ECO:0007744" key="11">
    <source>
        <dbReference type="PDB" id="1WGU"/>
    </source>
</evidence>
<evidence type="ECO:0007744" key="12">
    <source>
        <dbReference type="PDB" id="2ROZ"/>
    </source>
</evidence>
<evidence type="ECO:0007744" key="13">
    <source>
        <dbReference type="PDB" id="2YSZ"/>
    </source>
</evidence>
<evidence type="ECO:0007744" key="14">
    <source>
        <dbReference type="PDB" id="2YT0"/>
    </source>
</evidence>
<evidence type="ECO:0007744" key="15">
    <source>
        <dbReference type="PDB" id="2YT1"/>
    </source>
</evidence>
<evidence type="ECO:0007744" key="16">
    <source>
    </source>
</evidence>
<evidence type="ECO:0007829" key="17">
    <source>
        <dbReference type="PDB" id="1WGU"/>
    </source>
</evidence>
<evidence type="ECO:0007829" key="18">
    <source>
        <dbReference type="PDB" id="2ROZ"/>
    </source>
</evidence>
<protein>
    <recommendedName>
        <fullName evidence="1">Amyloid beta precursor protein binding family B member 2</fullName>
    </recommendedName>
    <alternativeName>
        <fullName evidence="10">Amyloid-beta (A4) precursor protein-binding family B member 2</fullName>
    </alternativeName>
    <alternativeName>
        <fullName evidence="1">Protein Fe65-like 1</fullName>
    </alternativeName>
</protein>
<feature type="chain" id="PRO_0000076053" description="Amyloid beta precursor protein binding family B member 2">
    <location>
        <begin position="1"/>
        <end position="760"/>
    </location>
</feature>
<feature type="domain" description="WW" evidence="3">
    <location>
        <begin position="290"/>
        <end position="322"/>
    </location>
</feature>
<feature type="domain" description="PID 1" evidence="2">
    <location>
        <begin position="413"/>
        <end position="580"/>
    </location>
</feature>
<feature type="domain" description="PID 2" evidence="2">
    <location>
        <begin position="586"/>
        <end position="738"/>
    </location>
</feature>
<feature type="region of interest" description="Disordered" evidence="4">
    <location>
        <begin position="177"/>
        <end position="295"/>
    </location>
</feature>
<feature type="region of interest" description="Disordered" evidence="4">
    <location>
        <begin position="324"/>
        <end position="351"/>
    </location>
</feature>
<feature type="compositionally biased region" description="Polar residues" evidence="4">
    <location>
        <begin position="212"/>
        <end position="230"/>
    </location>
</feature>
<feature type="compositionally biased region" description="Polar residues" evidence="4">
    <location>
        <begin position="261"/>
        <end position="275"/>
    </location>
</feature>
<feature type="modified residue" description="Phosphoserine" evidence="1">
    <location>
        <position position="123"/>
    </location>
</feature>
<feature type="modified residue" description="Phosphoserine" evidence="16">
    <location>
        <position position="160"/>
    </location>
</feature>
<feature type="modified residue" description="Phosphoserine" evidence="16">
    <location>
        <position position="334"/>
    </location>
</feature>
<feature type="modified residue" description="Phosphoserine" evidence="16">
    <location>
        <position position="409"/>
    </location>
</feature>
<feature type="modified residue" description="Phosphoserine" evidence="16">
    <location>
        <position position="412"/>
    </location>
</feature>
<feature type="splice variant" id="VSP_011661" description="In isoform 2 and isoform 3." evidence="8">
    <location>
        <begin position="348"/>
        <end position="368"/>
    </location>
</feature>
<feature type="splice variant" id="VSP_011662" description="In isoform 3." evidence="8">
    <location>
        <begin position="509"/>
        <end position="510"/>
    </location>
</feature>
<feature type="strand" evidence="17">
    <location>
        <begin position="592"/>
        <end position="601"/>
    </location>
</feature>
<feature type="strand" evidence="18">
    <location>
        <begin position="603"/>
        <end position="605"/>
    </location>
</feature>
<feature type="helix" evidence="17">
    <location>
        <begin position="609"/>
        <end position="620"/>
    </location>
</feature>
<feature type="turn" evidence="17">
    <location>
        <begin position="624"/>
        <end position="626"/>
    </location>
</feature>
<feature type="strand" evidence="17">
    <location>
        <begin position="629"/>
        <end position="635"/>
    </location>
</feature>
<feature type="strand" evidence="17">
    <location>
        <begin position="638"/>
        <end position="642"/>
    </location>
</feature>
<feature type="strand" evidence="17">
    <location>
        <begin position="650"/>
        <end position="655"/>
    </location>
</feature>
<feature type="turn" evidence="17">
    <location>
        <begin position="656"/>
        <end position="658"/>
    </location>
</feature>
<feature type="strand" evidence="17">
    <location>
        <begin position="659"/>
        <end position="664"/>
    </location>
</feature>
<feature type="strand" evidence="17">
    <location>
        <begin position="671"/>
        <end position="676"/>
    </location>
</feature>
<feature type="strand" evidence="17">
    <location>
        <begin position="678"/>
        <end position="680"/>
    </location>
</feature>
<feature type="strand" evidence="17">
    <location>
        <begin position="682"/>
        <end position="688"/>
    </location>
</feature>
<feature type="helix" evidence="17">
    <location>
        <begin position="694"/>
        <end position="704"/>
    </location>
</feature>
<comment type="function">
    <text evidence="1 6 7">Plays a role in the maintenance of lens transparency, and may also play a role in muscle cell strength (PubMed:25757569, PubMed:27734846). Involved in hippocampal neurite branching and neuromuscular junction formation, as a result plays a role in spatial memory functioning (PubMed:27734846). Activates transcription of APP (By similarity).</text>
</comment>
<comment type="subunit">
    <text evidence="1 5">Interacts (via C-terminus) with APP (via C-terminus) (PubMed:18650440). Interacts with APLP2 (via cytoplasmic domain) (By similarity).</text>
</comment>
<comment type="subcellular location">
    <subcellularLocation>
        <location evidence="1">Endoplasmic reticulum</location>
    </subcellularLocation>
    <subcellularLocation>
        <location evidence="1">Golgi apparatus</location>
    </subcellularLocation>
    <subcellularLocation>
        <location evidence="1">Early endosome</location>
    </subcellularLocation>
</comment>
<comment type="alternative products">
    <event type="alternative splicing"/>
    <isoform>
        <id>Q9DBR4-1</id>
        <name>1</name>
        <sequence type="displayed"/>
    </isoform>
    <isoform>
        <id>Q9DBR4-2</id>
        <name>2</name>
        <sequence type="described" ref="VSP_011661"/>
    </isoform>
    <isoform>
        <id>Q9DBR4-3</id>
        <name>3</name>
        <sequence type="described" ref="VSP_011661 VSP_011662"/>
    </isoform>
</comment>
<comment type="tissue specificity">
    <text evidence="6">Expressed in the brain, retinal lens and muscle cells (at protein level).</text>
</comment>
<comment type="disruption phenotype">
    <text evidence="6 7">Knockout mice develop cataracts from 16 months of age with defects such as ulcer-like anomalies in the cornea, and opacity in the lens cortex or wider lens. Decreased muscle strength, however clasping ability is unaffected (PubMed:25757569). Impaired spatial memory retrieval and learning (PubMed:27734846). Reduced branching of hippocampal neurites and increased fragmentation of neuromuscular junctions (PubMed:27734846). APBB1 and APBB2 double knockout mice show progressive retinal lens disruption from 1 month of age, morphologically lenses show massive vacuolization, lens capsule rupture and disruption of the lens fiber cells organization. Decreased muscle strength, however clasping ability is unaffected (PubMed:25757569, PubMed:27734846). Defects in peripheral motor function including balance and coordination, reduced environmental anxiety, reduced hippocampal basal synaptic transmission and synaptic plasticity (PubMed:27734846).</text>
</comment>
<proteinExistence type="evidence at protein level"/>
<name>APBB2_MOUSE</name>
<reference key="1">
    <citation type="journal article" date="2005" name="Science">
        <title>The transcriptional landscape of the mammalian genome.</title>
        <authorList>
            <person name="Carninci P."/>
            <person name="Kasukawa T."/>
            <person name="Katayama S."/>
            <person name="Gough J."/>
            <person name="Frith M.C."/>
            <person name="Maeda N."/>
            <person name="Oyama R."/>
            <person name="Ravasi T."/>
            <person name="Lenhard B."/>
            <person name="Wells C."/>
            <person name="Kodzius R."/>
            <person name="Shimokawa K."/>
            <person name="Bajic V.B."/>
            <person name="Brenner S.E."/>
            <person name="Batalov S."/>
            <person name="Forrest A.R."/>
            <person name="Zavolan M."/>
            <person name="Davis M.J."/>
            <person name="Wilming L.G."/>
            <person name="Aidinis V."/>
            <person name="Allen J.E."/>
            <person name="Ambesi-Impiombato A."/>
            <person name="Apweiler R."/>
            <person name="Aturaliya R.N."/>
            <person name="Bailey T.L."/>
            <person name="Bansal M."/>
            <person name="Baxter L."/>
            <person name="Beisel K.W."/>
            <person name="Bersano T."/>
            <person name="Bono H."/>
            <person name="Chalk A.M."/>
            <person name="Chiu K.P."/>
            <person name="Choudhary V."/>
            <person name="Christoffels A."/>
            <person name="Clutterbuck D.R."/>
            <person name="Crowe M.L."/>
            <person name="Dalla E."/>
            <person name="Dalrymple B.P."/>
            <person name="de Bono B."/>
            <person name="Della Gatta G."/>
            <person name="di Bernardo D."/>
            <person name="Down T."/>
            <person name="Engstrom P."/>
            <person name="Fagiolini M."/>
            <person name="Faulkner G."/>
            <person name="Fletcher C.F."/>
            <person name="Fukushima T."/>
            <person name="Furuno M."/>
            <person name="Futaki S."/>
            <person name="Gariboldi M."/>
            <person name="Georgii-Hemming P."/>
            <person name="Gingeras T.R."/>
            <person name="Gojobori T."/>
            <person name="Green R.E."/>
            <person name="Gustincich S."/>
            <person name="Harbers M."/>
            <person name="Hayashi Y."/>
            <person name="Hensch T.K."/>
            <person name="Hirokawa N."/>
            <person name="Hill D."/>
            <person name="Huminiecki L."/>
            <person name="Iacono M."/>
            <person name="Ikeo K."/>
            <person name="Iwama A."/>
            <person name="Ishikawa T."/>
            <person name="Jakt M."/>
            <person name="Kanapin A."/>
            <person name="Katoh M."/>
            <person name="Kawasawa Y."/>
            <person name="Kelso J."/>
            <person name="Kitamura H."/>
            <person name="Kitano H."/>
            <person name="Kollias G."/>
            <person name="Krishnan S.P."/>
            <person name="Kruger A."/>
            <person name="Kummerfeld S.K."/>
            <person name="Kurochkin I.V."/>
            <person name="Lareau L.F."/>
            <person name="Lazarevic D."/>
            <person name="Lipovich L."/>
            <person name="Liu J."/>
            <person name="Liuni S."/>
            <person name="McWilliam S."/>
            <person name="Madan Babu M."/>
            <person name="Madera M."/>
            <person name="Marchionni L."/>
            <person name="Matsuda H."/>
            <person name="Matsuzawa S."/>
            <person name="Miki H."/>
            <person name="Mignone F."/>
            <person name="Miyake S."/>
            <person name="Morris K."/>
            <person name="Mottagui-Tabar S."/>
            <person name="Mulder N."/>
            <person name="Nakano N."/>
            <person name="Nakauchi H."/>
            <person name="Ng P."/>
            <person name="Nilsson R."/>
            <person name="Nishiguchi S."/>
            <person name="Nishikawa S."/>
            <person name="Nori F."/>
            <person name="Ohara O."/>
            <person name="Okazaki Y."/>
            <person name="Orlando V."/>
            <person name="Pang K.C."/>
            <person name="Pavan W.J."/>
            <person name="Pavesi G."/>
            <person name="Pesole G."/>
            <person name="Petrovsky N."/>
            <person name="Piazza S."/>
            <person name="Reed J."/>
            <person name="Reid J.F."/>
            <person name="Ring B.Z."/>
            <person name="Ringwald M."/>
            <person name="Rost B."/>
            <person name="Ruan Y."/>
            <person name="Salzberg S.L."/>
            <person name="Sandelin A."/>
            <person name="Schneider C."/>
            <person name="Schoenbach C."/>
            <person name="Sekiguchi K."/>
            <person name="Semple C.A."/>
            <person name="Seno S."/>
            <person name="Sessa L."/>
            <person name="Sheng Y."/>
            <person name="Shibata Y."/>
            <person name="Shimada H."/>
            <person name="Shimada K."/>
            <person name="Silva D."/>
            <person name="Sinclair B."/>
            <person name="Sperling S."/>
            <person name="Stupka E."/>
            <person name="Sugiura K."/>
            <person name="Sultana R."/>
            <person name="Takenaka Y."/>
            <person name="Taki K."/>
            <person name="Tammoja K."/>
            <person name="Tan S.L."/>
            <person name="Tang S."/>
            <person name="Taylor M.S."/>
            <person name="Tegner J."/>
            <person name="Teichmann S.A."/>
            <person name="Ueda H.R."/>
            <person name="van Nimwegen E."/>
            <person name="Verardo R."/>
            <person name="Wei C.L."/>
            <person name="Yagi K."/>
            <person name="Yamanishi H."/>
            <person name="Zabarovsky E."/>
            <person name="Zhu S."/>
            <person name="Zimmer A."/>
            <person name="Hide W."/>
            <person name="Bult C."/>
            <person name="Grimmond S.M."/>
            <person name="Teasdale R.D."/>
            <person name="Liu E.T."/>
            <person name="Brusic V."/>
            <person name="Quackenbush J."/>
            <person name="Wahlestedt C."/>
            <person name="Mattick J.S."/>
            <person name="Hume D.A."/>
            <person name="Kai C."/>
            <person name="Sasaki D."/>
            <person name="Tomaru Y."/>
            <person name="Fukuda S."/>
            <person name="Kanamori-Katayama M."/>
            <person name="Suzuki M."/>
            <person name="Aoki J."/>
            <person name="Arakawa T."/>
            <person name="Iida J."/>
            <person name="Imamura K."/>
            <person name="Itoh M."/>
            <person name="Kato T."/>
            <person name="Kawaji H."/>
            <person name="Kawagashira N."/>
            <person name="Kawashima T."/>
            <person name="Kojima M."/>
            <person name="Kondo S."/>
            <person name="Konno H."/>
            <person name="Nakano K."/>
            <person name="Ninomiya N."/>
            <person name="Nishio T."/>
            <person name="Okada M."/>
            <person name="Plessy C."/>
            <person name="Shibata K."/>
            <person name="Shiraki T."/>
            <person name="Suzuki S."/>
            <person name="Tagami M."/>
            <person name="Waki K."/>
            <person name="Watahiki A."/>
            <person name="Okamura-Oho Y."/>
            <person name="Suzuki H."/>
            <person name="Kawai J."/>
            <person name="Hayashizaki Y."/>
        </authorList>
    </citation>
    <scope>NUCLEOTIDE SEQUENCE [LARGE SCALE MRNA] (ISOFORM 1)</scope>
    <source>
        <strain>C57BL/6J</strain>
        <tissue>Lung</tissue>
    </source>
</reference>
<reference key="2">
    <citation type="journal article" date="2004" name="Genome Res.">
        <title>The status, quality, and expansion of the NIH full-length cDNA project: the Mammalian Gene Collection (MGC).</title>
        <authorList>
            <consortium name="The MGC Project Team"/>
        </authorList>
    </citation>
    <scope>NUCLEOTIDE SEQUENCE [LARGE SCALE MRNA] (ISOFORM 3)</scope>
    <source>
        <strain>C57BL/6J</strain>
        <tissue>Eye</tissue>
    </source>
</reference>
<reference key="3">
    <citation type="journal article" date="2010" name="Cell">
        <title>A tissue-specific atlas of mouse protein phosphorylation and expression.</title>
        <authorList>
            <person name="Huttlin E.L."/>
            <person name="Jedrychowski M.P."/>
            <person name="Elias J.E."/>
            <person name="Goswami T."/>
            <person name="Rad R."/>
            <person name="Beausoleil S.A."/>
            <person name="Villen J."/>
            <person name="Haas W."/>
            <person name="Sowa M.E."/>
            <person name="Gygi S.P."/>
        </authorList>
    </citation>
    <scope>PHOSPHORYLATION [LARGE SCALE ANALYSIS] AT SER-160; SER-334; SER-409 AND SER-412</scope>
    <scope>IDENTIFICATION BY MASS SPECTROMETRY [LARGE SCALE ANALYSIS]</scope>
    <source>
        <tissue>Brown adipose tissue</tissue>
        <tissue>Heart</tissue>
        <tissue>Kidney</tissue>
        <tissue>Liver</tissue>
        <tissue>Lung</tissue>
        <tissue>Spleen</tissue>
    </source>
</reference>
<reference key="4">
    <citation type="journal article" date="2015" name="FASEB J.">
        <title>FE65 and FE65L1 amyloid precursor protein-binding protein compound null mice display adult-onset cataract and muscle weakness.</title>
        <authorList>
            <person name="Suh J."/>
            <person name="Moncaster J.A."/>
            <person name="Wang L."/>
            <person name="Hafeez I."/>
            <person name="Herz J."/>
            <person name="Tanzi R.E."/>
            <person name="Goldstein L.E."/>
            <person name="Guenette S.Y."/>
        </authorList>
    </citation>
    <scope>FUNCTION</scope>
    <scope>TISSUE SPECIFICITY</scope>
    <scope>DISRUPTION PHENOTYPE</scope>
</reference>
<reference key="5">
    <citation type="journal article" date="2016" name="Sci. Rep.">
        <title>FE65 and FE65L1 share common synaptic functions and genetically interact with the APP family in neuromuscular junction formation.</title>
        <authorList>
            <person name="Strecker P."/>
            <person name="Ludewig S."/>
            <person name="Rust M."/>
            <person name="Mundinger T.A."/>
            <person name="Goerlich A."/>
            <person name="Kraechan E.G."/>
            <person name="Mehrfeld C."/>
            <person name="Herz J."/>
            <person name="Korte M."/>
            <person name="Guenette S.Y."/>
            <person name="Kins S."/>
        </authorList>
    </citation>
    <scope>FUNCTION</scope>
    <scope>DISRUPTION PHENOTYPE</scope>
</reference>
<reference key="6">
    <citation type="submission" date="2004-11" db="PDB data bank">
        <title>Solution structure of the C-terminal phosphotyrosine interaction domain of APBB2 from mouse.</title>
        <authorList>
            <consortium name="RIKEN structural genomics initiative (RSGI)"/>
        </authorList>
    </citation>
    <scope>STRUCTURE BY NMR OF 582-704</scope>
</reference>
<reference evidence="11 12 13 14 15" key="7">
    <citation type="journal article" date="2008" name="J. Biol. Chem.">
        <title>Structure of the C-terminal phosphotyrosine interaction domain of Fe65L1 complexed with the cytoplasmic tail of amyloid precursor protein reveals a novel peptide binding mode.</title>
        <authorList>
            <person name="Li H."/>
            <person name="Koshiba S."/>
            <person name="Hayashi F."/>
            <person name="Tochio N."/>
            <person name="Tomizawa T."/>
            <person name="Kasai T."/>
            <person name="Yabuki T."/>
            <person name="Motoda Y."/>
            <person name="Harada T."/>
            <person name="Watanabe S."/>
            <person name="Inoue M."/>
            <person name="Hayashizaki Y."/>
            <person name="Tanaka A."/>
            <person name="Kigawa T."/>
            <person name="Yokoyama S."/>
        </authorList>
    </citation>
    <scope>STRUCTURE BY NMR OF 564-567 AND 582-704</scope>
    <scope>INTERACTION WITH APP</scope>
</reference>
<sequence length="760" mass="83201">MSEVLPADSGVGTLAVFMASSGSTDIANRNSPATPPNTLNLRSSHNELLNAEIKHSDAKNSTPPKCRKKYALTNIQAAMGLSDPAVQPLLGNGSANIKLVKNGENQLRKAAEQGQQDPNKNLSPAAVINLTSEKLEVKDPHPQESSGCEILPSQPRRTKSFLNYYADLETSARELGQNLGPCQGVGEEKAQPGPGQAPVVIGNGDLLPQKPNKPQSSPEDGQVATVSSSPETKKDHPKTGAKTDCALHRIQNLAPSDEESSWTTLSQDSASPSSPDETDIWSDHSFQTDPDLPPGWKRVNDIAGTYYWHIPTGTTQWERPVSIPADLHGSRKGSLSSVTPSPTPENEKQPWSDFAVLNGGKINSDIWKDLHAATVNPDPSLKEFEGATLRYASLKLRNAPHGDDDDSCSINSDPEAKCFAVRSLGWVEMAEEDLAPGKSSVAVNNCIRQLSYCKNDIRDTVGIWGEGKDMYLSLENDMLSLVDPMDRSVLHSQPIVNIRVWGVGRDNGRERDFAYVARDKDTRILKCHVFRCDTPAKAIATSLHEICSKIMAERKNAKALACSSLQERTNMSLDVPLQVDFPTPKTELVQKFRVQYLGMLPVDRPVGMDTLNSAIENLMTSSSKEDWPSVNMNVADATVTVISEKNEEEVLVECRVRFLSFMGVGKDVHTFAFIMDTGNQRFECHVFWCEPNAANVSEAVQAACMLRYQKCLVARPPSQKVRPPPPPADSVTRRVTTNVKRGVLSLIDTLKQKRPVTETP</sequence>
<keyword id="KW-0002">3D-structure</keyword>
<keyword id="KW-0025">Alternative splicing</keyword>
<keyword id="KW-0256">Endoplasmic reticulum</keyword>
<keyword id="KW-0967">Endosome</keyword>
<keyword id="KW-0333">Golgi apparatus</keyword>
<keyword id="KW-0597">Phosphoprotein</keyword>
<keyword id="KW-1185">Reference proteome</keyword>
<keyword id="KW-0677">Repeat</keyword>
<gene>
    <name evidence="10" type="primary">Apbb2</name>
    <name evidence="1" type="synonym">Fe65l</name>
    <name evidence="9" type="synonym">Fe65l1</name>
</gene>
<organism>
    <name type="scientific">Mus musculus</name>
    <name type="common">Mouse</name>
    <dbReference type="NCBI Taxonomy" id="10090"/>
    <lineage>
        <taxon>Eukaryota</taxon>
        <taxon>Metazoa</taxon>
        <taxon>Chordata</taxon>
        <taxon>Craniata</taxon>
        <taxon>Vertebrata</taxon>
        <taxon>Euteleostomi</taxon>
        <taxon>Mammalia</taxon>
        <taxon>Eutheria</taxon>
        <taxon>Euarchontoglires</taxon>
        <taxon>Glires</taxon>
        <taxon>Rodentia</taxon>
        <taxon>Myomorpha</taxon>
        <taxon>Muroidea</taxon>
        <taxon>Muridae</taxon>
        <taxon>Murinae</taxon>
        <taxon>Mus</taxon>
        <taxon>Mus</taxon>
    </lineage>
</organism>
<accession>Q9DBR4</accession>
<accession>Q6DFX8</accession>